<sequence>MSAKKSTKDSKEQNTPLGGLVLAETPITFNENKPVTKVKVRNTGDRPIQVGSHFHFFEVNRALEFDRAAAYGKRLNISSTTAIRFEPGDETEVPLIPFGGKQTLYGFNNLVDGWTGEGVVPNSERPDKLAAIRLAAERGFKSSK</sequence>
<reference key="1">
    <citation type="journal article" date="2007" name="PLoS Genet.">
        <title>The complete genome sequence of Yersinia pseudotuberculosis IP31758, the causative agent of Far East scarlet-like fever.</title>
        <authorList>
            <person name="Eppinger M."/>
            <person name="Rosovitz M.J."/>
            <person name="Fricke W.F."/>
            <person name="Rasko D.A."/>
            <person name="Kokorina G."/>
            <person name="Fayolle C."/>
            <person name="Lindler L.E."/>
            <person name="Carniel E."/>
            <person name="Ravel J."/>
        </authorList>
    </citation>
    <scope>NUCLEOTIDE SEQUENCE [LARGE SCALE GENOMIC DNA]</scope>
    <source>
        <strain>IP 31758</strain>
    </source>
</reference>
<dbReference type="EC" id="3.5.1.5" evidence="1"/>
<dbReference type="EMBL" id="CP000720">
    <property type="protein sequence ID" value="ABS49676.1"/>
    <property type="molecule type" value="Genomic_DNA"/>
</dbReference>
<dbReference type="RefSeq" id="WP_002212228.1">
    <property type="nucleotide sequence ID" value="NC_009708.1"/>
</dbReference>
<dbReference type="SMR" id="A7FFN1"/>
<dbReference type="GeneID" id="57976028"/>
<dbReference type="KEGG" id="ypi:YpsIP31758_1078"/>
<dbReference type="HOGENOM" id="CLU_129707_2_0_6"/>
<dbReference type="UniPathway" id="UPA00258">
    <property type="reaction ID" value="UER00370"/>
</dbReference>
<dbReference type="Proteomes" id="UP000002412">
    <property type="component" value="Chromosome"/>
</dbReference>
<dbReference type="GO" id="GO:0035550">
    <property type="term" value="C:urease complex"/>
    <property type="evidence" value="ECO:0007669"/>
    <property type="project" value="InterPro"/>
</dbReference>
<dbReference type="GO" id="GO:0009039">
    <property type="term" value="F:urease activity"/>
    <property type="evidence" value="ECO:0007669"/>
    <property type="project" value="UniProtKB-UniRule"/>
</dbReference>
<dbReference type="GO" id="GO:0043419">
    <property type="term" value="P:urea catabolic process"/>
    <property type="evidence" value="ECO:0007669"/>
    <property type="project" value="UniProtKB-UniRule"/>
</dbReference>
<dbReference type="CDD" id="cd00407">
    <property type="entry name" value="Urease_beta"/>
    <property type="match status" value="1"/>
</dbReference>
<dbReference type="Gene3D" id="2.10.150.10">
    <property type="entry name" value="Urease, beta subunit"/>
    <property type="match status" value="1"/>
</dbReference>
<dbReference type="HAMAP" id="MF_01954">
    <property type="entry name" value="Urease_beta"/>
    <property type="match status" value="1"/>
</dbReference>
<dbReference type="InterPro" id="IPR002019">
    <property type="entry name" value="Urease_beta-like"/>
</dbReference>
<dbReference type="InterPro" id="IPR036461">
    <property type="entry name" value="Urease_betasu_sf"/>
</dbReference>
<dbReference type="InterPro" id="IPR050069">
    <property type="entry name" value="Urease_subunit"/>
</dbReference>
<dbReference type="NCBIfam" id="NF009682">
    <property type="entry name" value="PRK13203.1"/>
    <property type="match status" value="1"/>
</dbReference>
<dbReference type="NCBIfam" id="TIGR00192">
    <property type="entry name" value="urease_beta"/>
    <property type="match status" value="1"/>
</dbReference>
<dbReference type="PANTHER" id="PTHR33569">
    <property type="entry name" value="UREASE"/>
    <property type="match status" value="1"/>
</dbReference>
<dbReference type="PANTHER" id="PTHR33569:SF1">
    <property type="entry name" value="UREASE"/>
    <property type="match status" value="1"/>
</dbReference>
<dbReference type="Pfam" id="PF00699">
    <property type="entry name" value="Urease_beta"/>
    <property type="match status" value="1"/>
</dbReference>
<dbReference type="SUPFAM" id="SSF51278">
    <property type="entry name" value="Urease, beta-subunit"/>
    <property type="match status" value="1"/>
</dbReference>
<name>URE2_YERP3</name>
<feature type="chain" id="PRO_1000088514" description="Urease subunit beta">
    <location>
        <begin position="1"/>
        <end position="144"/>
    </location>
</feature>
<proteinExistence type="inferred from homology"/>
<keyword id="KW-0963">Cytoplasm</keyword>
<keyword id="KW-0378">Hydrolase</keyword>
<organism>
    <name type="scientific">Yersinia pseudotuberculosis serotype O:1b (strain IP 31758)</name>
    <dbReference type="NCBI Taxonomy" id="349747"/>
    <lineage>
        <taxon>Bacteria</taxon>
        <taxon>Pseudomonadati</taxon>
        <taxon>Pseudomonadota</taxon>
        <taxon>Gammaproteobacteria</taxon>
        <taxon>Enterobacterales</taxon>
        <taxon>Yersiniaceae</taxon>
        <taxon>Yersinia</taxon>
    </lineage>
</organism>
<evidence type="ECO:0000255" key="1">
    <source>
        <dbReference type="HAMAP-Rule" id="MF_01954"/>
    </source>
</evidence>
<protein>
    <recommendedName>
        <fullName evidence="1">Urease subunit beta</fullName>
        <ecNumber evidence="1">3.5.1.5</ecNumber>
    </recommendedName>
    <alternativeName>
        <fullName evidence="1">Urea amidohydrolase subunit beta</fullName>
    </alternativeName>
</protein>
<comment type="catalytic activity">
    <reaction evidence="1">
        <text>urea + 2 H2O + H(+) = hydrogencarbonate + 2 NH4(+)</text>
        <dbReference type="Rhea" id="RHEA:20557"/>
        <dbReference type="ChEBI" id="CHEBI:15377"/>
        <dbReference type="ChEBI" id="CHEBI:15378"/>
        <dbReference type="ChEBI" id="CHEBI:16199"/>
        <dbReference type="ChEBI" id="CHEBI:17544"/>
        <dbReference type="ChEBI" id="CHEBI:28938"/>
        <dbReference type="EC" id="3.5.1.5"/>
    </reaction>
</comment>
<comment type="pathway">
    <text evidence="1">Nitrogen metabolism; urea degradation; CO(2) and NH(3) from urea (urease route): step 1/1.</text>
</comment>
<comment type="subunit">
    <text evidence="1">Heterotrimer of UreA (gamma), UreB (beta) and UreC (alpha) subunits. Three heterotrimers associate to form the active enzyme.</text>
</comment>
<comment type="subcellular location">
    <subcellularLocation>
        <location evidence="1">Cytoplasm</location>
    </subcellularLocation>
</comment>
<comment type="similarity">
    <text evidence="1">Belongs to the urease beta subunit family.</text>
</comment>
<gene>
    <name evidence="1" type="primary">ureB</name>
    <name type="ordered locus">YpsIP31758_1078</name>
</gene>
<accession>A7FFN1</accession>